<sequence length="359" mass="40963">MDKIFEQLDGLLDRYEELQELMSDPEVISDTKRYLALSKEEGGMRDVVAAYKKYKQVLSDIKESEEVLRESKDDDMEALAKEDLEDLQKQKADLEDQIKVLMLPKDPNDDKNIIMEIRGAAGGDEASLFAGDLLNMYMHYAERQGWKTEIIDATPTEVGGYKEVVVMITGDNVYSKLKYENGAHRVQRVPVTESAGRVHTSTATVGVMPEYDEVDLKIDPKDIRTDVYRSSGAGGQHVNKTSSAVRMTHIPSGIVVSMQDERSQQENRARAMQILRSRVYDYYETQNQEKYDQNRKNAIGTGDRSERIRTYNYPQNRVTDHRIGLTLNKLDRIMNGELDEIIDALIVHDQAQKMESLNV</sequence>
<proteinExistence type="inferred from homology"/>
<name>RF1_LACCB</name>
<feature type="chain" id="PRO_1000093467" description="Peptide chain release factor 1">
    <location>
        <begin position="1"/>
        <end position="359"/>
    </location>
</feature>
<feature type="modified residue" description="N5-methylglutamine" evidence="1">
    <location>
        <position position="236"/>
    </location>
</feature>
<reference key="1">
    <citation type="submission" date="2008-06" db="EMBL/GenBank/DDBJ databases">
        <title>Lactobacillus casei BL23 complete genome sequence.</title>
        <authorList>
            <person name="Maze A."/>
            <person name="Boel G."/>
            <person name="Bourand A."/>
            <person name="Loux V."/>
            <person name="Gibrat J.F."/>
            <person name="Zuniga M."/>
            <person name="Hartke A."/>
            <person name="Deutscher J."/>
        </authorList>
    </citation>
    <scope>NUCLEOTIDE SEQUENCE [LARGE SCALE GENOMIC DNA]</scope>
    <source>
        <strain>BL23</strain>
    </source>
</reference>
<dbReference type="EMBL" id="FM177140">
    <property type="protein sequence ID" value="CAQ66458.1"/>
    <property type="molecule type" value="Genomic_DNA"/>
</dbReference>
<dbReference type="SMR" id="B3WDK7"/>
<dbReference type="KEGG" id="lcb:LCABL_13770"/>
<dbReference type="HOGENOM" id="CLU_036856_0_1_9"/>
<dbReference type="GO" id="GO:0005737">
    <property type="term" value="C:cytoplasm"/>
    <property type="evidence" value="ECO:0007669"/>
    <property type="project" value="UniProtKB-SubCell"/>
</dbReference>
<dbReference type="GO" id="GO:0016149">
    <property type="term" value="F:translation release factor activity, codon specific"/>
    <property type="evidence" value="ECO:0007669"/>
    <property type="project" value="UniProtKB-UniRule"/>
</dbReference>
<dbReference type="FunFam" id="3.30.160.20:FF:000004">
    <property type="entry name" value="Peptide chain release factor 1"/>
    <property type="match status" value="1"/>
</dbReference>
<dbReference type="FunFam" id="3.30.70.1660:FF:000002">
    <property type="entry name" value="Peptide chain release factor 1"/>
    <property type="match status" value="1"/>
</dbReference>
<dbReference type="FunFam" id="3.30.70.1660:FF:000004">
    <property type="entry name" value="Peptide chain release factor 1"/>
    <property type="match status" value="1"/>
</dbReference>
<dbReference type="Gene3D" id="3.30.160.20">
    <property type="match status" value="1"/>
</dbReference>
<dbReference type="Gene3D" id="3.30.70.1660">
    <property type="match status" value="1"/>
</dbReference>
<dbReference type="Gene3D" id="6.10.140.1950">
    <property type="match status" value="1"/>
</dbReference>
<dbReference type="HAMAP" id="MF_00093">
    <property type="entry name" value="Rel_fac_1"/>
    <property type="match status" value="1"/>
</dbReference>
<dbReference type="InterPro" id="IPR005139">
    <property type="entry name" value="PCRF"/>
</dbReference>
<dbReference type="InterPro" id="IPR000352">
    <property type="entry name" value="Pep_chain_release_fac_I"/>
</dbReference>
<dbReference type="InterPro" id="IPR045853">
    <property type="entry name" value="Pep_chain_release_fac_I_sf"/>
</dbReference>
<dbReference type="InterPro" id="IPR050057">
    <property type="entry name" value="Prokaryotic/Mito_RF"/>
</dbReference>
<dbReference type="InterPro" id="IPR004373">
    <property type="entry name" value="RF-1"/>
</dbReference>
<dbReference type="NCBIfam" id="TIGR00019">
    <property type="entry name" value="prfA"/>
    <property type="match status" value="1"/>
</dbReference>
<dbReference type="NCBIfam" id="NF001859">
    <property type="entry name" value="PRK00591.1"/>
    <property type="match status" value="1"/>
</dbReference>
<dbReference type="PANTHER" id="PTHR43804">
    <property type="entry name" value="LD18447P"/>
    <property type="match status" value="1"/>
</dbReference>
<dbReference type="PANTHER" id="PTHR43804:SF7">
    <property type="entry name" value="LD18447P"/>
    <property type="match status" value="1"/>
</dbReference>
<dbReference type="Pfam" id="PF03462">
    <property type="entry name" value="PCRF"/>
    <property type="match status" value="1"/>
</dbReference>
<dbReference type="Pfam" id="PF00472">
    <property type="entry name" value="RF-1"/>
    <property type="match status" value="1"/>
</dbReference>
<dbReference type="SMART" id="SM00937">
    <property type="entry name" value="PCRF"/>
    <property type="match status" value="1"/>
</dbReference>
<dbReference type="SUPFAM" id="SSF75620">
    <property type="entry name" value="Release factor"/>
    <property type="match status" value="1"/>
</dbReference>
<dbReference type="PROSITE" id="PS00745">
    <property type="entry name" value="RF_PROK_I"/>
    <property type="match status" value="1"/>
</dbReference>
<organism>
    <name type="scientific">Lacticaseibacillus casei (strain BL23)</name>
    <name type="common">Lactobacillus casei</name>
    <dbReference type="NCBI Taxonomy" id="543734"/>
    <lineage>
        <taxon>Bacteria</taxon>
        <taxon>Bacillati</taxon>
        <taxon>Bacillota</taxon>
        <taxon>Bacilli</taxon>
        <taxon>Lactobacillales</taxon>
        <taxon>Lactobacillaceae</taxon>
        <taxon>Lacticaseibacillus</taxon>
    </lineage>
</organism>
<evidence type="ECO:0000255" key="1">
    <source>
        <dbReference type="HAMAP-Rule" id="MF_00093"/>
    </source>
</evidence>
<protein>
    <recommendedName>
        <fullName evidence="1">Peptide chain release factor 1</fullName>
        <shortName evidence="1">RF-1</shortName>
    </recommendedName>
</protein>
<accession>B3WDK7</accession>
<keyword id="KW-0963">Cytoplasm</keyword>
<keyword id="KW-0488">Methylation</keyword>
<keyword id="KW-0648">Protein biosynthesis</keyword>
<comment type="function">
    <text evidence="1">Peptide chain release factor 1 directs the termination of translation in response to the peptide chain termination codons UAG and UAA.</text>
</comment>
<comment type="subcellular location">
    <subcellularLocation>
        <location evidence="1">Cytoplasm</location>
    </subcellularLocation>
</comment>
<comment type="PTM">
    <text evidence="1">Methylated by PrmC. Methylation increases the termination efficiency of RF1.</text>
</comment>
<comment type="similarity">
    <text evidence="1">Belongs to the prokaryotic/mitochondrial release factor family.</text>
</comment>
<gene>
    <name evidence="1" type="primary">prfA</name>
    <name type="ordered locus">LCABL_13770</name>
</gene>